<feature type="chain" id="PRO_0000271517" description="Xylose import ATP-binding protein XylG">
    <location>
        <begin position="1"/>
        <end position="505"/>
    </location>
</feature>
<feature type="domain" description="ABC transporter 1" evidence="1">
    <location>
        <begin position="6"/>
        <end position="243"/>
    </location>
</feature>
<feature type="domain" description="ABC transporter 2" evidence="1">
    <location>
        <begin position="262"/>
        <end position="505"/>
    </location>
</feature>
<feature type="binding site" evidence="1">
    <location>
        <begin position="38"/>
        <end position="45"/>
    </location>
    <ligand>
        <name>ATP</name>
        <dbReference type="ChEBI" id="CHEBI:30616"/>
    </ligand>
</feature>
<sequence length="505" mass="56706">MSEYILEMRNITKEFPGVKALDNVNFKVKRGEIHALVGENGAGKSTLMKILSGVYPYGTYKGDIIIDGEVKQFRNIKDSEKSGIAIIYQELTLVKYMTVGENIFLGEEPVKGGIIDWMKVYSETYRLLKELQINVNPYTKVMNLGIGHQQMVEIAKALSKKARILILDEPTSALTESETEHLLNILKDLKKNGVTCIYISHKLNEVFEIADSITVLRDGKTIMTDKKENFTENKVISLMVGRELTQRFPRAKHTPGEVVFEVKNYTVYDHEIPGKKIIDNVSFKARRGEILGIAGLMGAGRTELAASIFGAFKGRKEGEIYLNGKKIEINTPSDAIKHGIAYLSEDRKRFGLVTLMDVQENIALPNYDRLSKFSIINNNAKIKHAEKYVKELKIKTPTIRQRVANLSGGNQQKVVIAKWLMSDPKVLILDEPTRGIDVGAKFEIYNLMNKLVDMGVCVIMISSELPEILGMSDRILVIHEGKINGEFPIEEADQEKIMYCATGGK</sequence>
<accession>Q6VMN4</accession>
<comment type="function">
    <text evidence="1">Part of the ABC transporter complex XylFGH involved in xylose import. Responsible for energy coupling to the transport system.</text>
</comment>
<comment type="catalytic activity">
    <reaction evidence="1">
        <text>D-xylose(out) + ATP + H2O = D-xylose(in) + ADP + phosphate + H(+)</text>
        <dbReference type="Rhea" id="RHEA:29899"/>
        <dbReference type="ChEBI" id="CHEBI:15377"/>
        <dbReference type="ChEBI" id="CHEBI:15378"/>
        <dbReference type="ChEBI" id="CHEBI:30616"/>
        <dbReference type="ChEBI" id="CHEBI:43474"/>
        <dbReference type="ChEBI" id="CHEBI:53455"/>
        <dbReference type="ChEBI" id="CHEBI:456216"/>
        <dbReference type="EC" id="7.5.2.10"/>
    </reaction>
</comment>
<comment type="subunit">
    <text evidence="1">The complex is composed of two ATP-binding proteins (XylG), two transmembrane proteins (XylH) and a solute-binding protein (XylF).</text>
</comment>
<comment type="subcellular location">
    <subcellularLocation>
        <location evidence="1">Cell membrane</location>
        <topology evidence="1">Peripheral membrane protein</topology>
    </subcellularLocation>
</comment>
<comment type="similarity">
    <text evidence="1">Belongs to the ABC transporter superfamily. Xylose importer (TC 3.A.1.2.4) family.</text>
</comment>
<proteinExistence type="inferred from homology"/>
<organism>
    <name type="scientific">Thermoanaerobacter pseudethanolicus (strain ATCC 33223 / 39E)</name>
    <name type="common">Clostridium thermohydrosulfuricum</name>
    <dbReference type="NCBI Taxonomy" id="340099"/>
    <lineage>
        <taxon>Bacteria</taxon>
        <taxon>Bacillati</taxon>
        <taxon>Bacillota</taxon>
        <taxon>Clostridia</taxon>
        <taxon>Thermoanaerobacterales</taxon>
        <taxon>Thermoanaerobacteraceae</taxon>
        <taxon>Thermoanaerobacter</taxon>
    </lineage>
</organism>
<gene>
    <name evidence="1" type="primary">xylG</name>
</gene>
<dbReference type="EC" id="7.5.2.10" evidence="1"/>
<dbReference type="EMBL" id="AY338239">
    <property type="protein sequence ID" value="AAQ93072.1"/>
    <property type="molecule type" value="Genomic_DNA"/>
</dbReference>
<dbReference type="SMR" id="Q6VMN4"/>
<dbReference type="BRENDA" id="7.5.2.10">
    <property type="organism ID" value="6284"/>
</dbReference>
<dbReference type="GO" id="GO:0005886">
    <property type="term" value="C:plasma membrane"/>
    <property type="evidence" value="ECO:0007669"/>
    <property type="project" value="UniProtKB-SubCell"/>
</dbReference>
<dbReference type="GO" id="GO:0015614">
    <property type="term" value="F:ABC-type D-xylose transporter activity"/>
    <property type="evidence" value="ECO:0007669"/>
    <property type="project" value="UniProtKB-EC"/>
</dbReference>
<dbReference type="GO" id="GO:0005524">
    <property type="term" value="F:ATP binding"/>
    <property type="evidence" value="ECO:0007669"/>
    <property type="project" value="UniProtKB-KW"/>
</dbReference>
<dbReference type="GO" id="GO:0016887">
    <property type="term" value="F:ATP hydrolysis activity"/>
    <property type="evidence" value="ECO:0007669"/>
    <property type="project" value="InterPro"/>
</dbReference>
<dbReference type="CDD" id="cd03216">
    <property type="entry name" value="ABC_Carb_Monos_I"/>
    <property type="match status" value="1"/>
</dbReference>
<dbReference type="CDD" id="cd03215">
    <property type="entry name" value="ABC_Carb_Monos_II"/>
    <property type="match status" value="1"/>
</dbReference>
<dbReference type="FunFam" id="3.40.50.300:FF:000126">
    <property type="entry name" value="Galactose/methyl galactoside import ATP-binding protein MglA"/>
    <property type="match status" value="1"/>
</dbReference>
<dbReference type="FunFam" id="3.40.50.300:FF:000127">
    <property type="entry name" value="Ribose import ATP-binding protein RbsA"/>
    <property type="match status" value="1"/>
</dbReference>
<dbReference type="Gene3D" id="3.40.50.300">
    <property type="entry name" value="P-loop containing nucleotide triphosphate hydrolases"/>
    <property type="match status" value="2"/>
</dbReference>
<dbReference type="InterPro" id="IPR003593">
    <property type="entry name" value="AAA+_ATPase"/>
</dbReference>
<dbReference type="InterPro" id="IPR050107">
    <property type="entry name" value="ABC_carbohydrate_import_ATPase"/>
</dbReference>
<dbReference type="InterPro" id="IPR003439">
    <property type="entry name" value="ABC_transporter-like_ATP-bd"/>
</dbReference>
<dbReference type="InterPro" id="IPR017871">
    <property type="entry name" value="ABC_transporter-like_CS"/>
</dbReference>
<dbReference type="InterPro" id="IPR027417">
    <property type="entry name" value="P-loop_NTPase"/>
</dbReference>
<dbReference type="NCBIfam" id="NF010069">
    <property type="entry name" value="PRK13549.1"/>
    <property type="match status" value="1"/>
</dbReference>
<dbReference type="PANTHER" id="PTHR43790">
    <property type="entry name" value="CARBOHYDRATE TRANSPORT ATP-BINDING PROTEIN MG119-RELATED"/>
    <property type="match status" value="1"/>
</dbReference>
<dbReference type="PANTHER" id="PTHR43790:SF1">
    <property type="entry name" value="XYLOSE IMPORT ATP-BINDING PROTEIN XYLG"/>
    <property type="match status" value="1"/>
</dbReference>
<dbReference type="Pfam" id="PF00005">
    <property type="entry name" value="ABC_tran"/>
    <property type="match status" value="2"/>
</dbReference>
<dbReference type="SMART" id="SM00382">
    <property type="entry name" value="AAA"/>
    <property type="match status" value="2"/>
</dbReference>
<dbReference type="SUPFAM" id="SSF52540">
    <property type="entry name" value="P-loop containing nucleoside triphosphate hydrolases"/>
    <property type="match status" value="2"/>
</dbReference>
<dbReference type="PROSITE" id="PS00211">
    <property type="entry name" value="ABC_TRANSPORTER_1"/>
    <property type="match status" value="1"/>
</dbReference>
<dbReference type="PROSITE" id="PS50893">
    <property type="entry name" value="ABC_TRANSPORTER_2"/>
    <property type="match status" value="2"/>
</dbReference>
<dbReference type="PROSITE" id="PS51280">
    <property type="entry name" value="XYLG"/>
    <property type="match status" value="1"/>
</dbReference>
<keyword id="KW-0067">ATP-binding</keyword>
<keyword id="KW-1003">Cell membrane</keyword>
<keyword id="KW-0472">Membrane</keyword>
<keyword id="KW-0547">Nucleotide-binding</keyword>
<keyword id="KW-0677">Repeat</keyword>
<keyword id="KW-0762">Sugar transport</keyword>
<keyword id="KW-1278">Translocase</keyword>
<keyword id="KW-0813">Transport</keyword>
<name>XYLG_THEP3</name>
<protein>
    <recommendedName>
        <fullName evidence="1">Xylose import ATP-binding protein XylG</fullName>
        <ecNumber evidence="1">7.5.2.10</ecNumber>
    </recommendedName>
</protein>
<reference key="1">
    <citation type="journal article" date="2004" name="Curr. Microbiol.">
        <title>Molecular analysis of the xylFGH operon, coding for xylose ABC transport, in Thermoanaerobacter ethanolicus.</title>
        <authorList>
            <person name="Erbeznik M."/>
            <person name="Hudson S.E."/>
            <person name="Herrman A.B."/>
            <person name="Strobel H.J."/>
        </authorList>
    </citation>
    <scope>NUCLEOTIDE SEQUENCE [GENOMIC DNA]</scope>
</reference>
<evidence type="ECO:0000255" key="1">
    <source>
        <dbReference type="HAMAP-Rule" id="MF_01722"/>
    </source>
</evidence>